<reference key="1">
    <citation type="journal article" date="2004" name="Proc. Natl. Acad. Sci. U.S.A.">
        <title>Complete genomes of two clinical Staphylococcus aureus strains: evidence for the rapid evolution of virulence and drug resistance.</title>
        <authorList>
            <person name="Holden M.T.G."/>
            <person name="Feil E.J."/>
            <person name="Lindsay J.A."/>
            <person name="Peacock S.J."/>
            <person name="Day N.P.J."/>
            <person name="Enright M.C."/>
            <person name="Foster T.J."/>
            <person name="Moore C.E."/>
            <person name="Hurst L."/>
            <person name="Atkin R."/>
            <person name="Barron A."/>
            <person name="Bason N."/>
            <person name="Bentley S.D."/>
            <person name="Chillingworth C."/>
            <person name="Chillingworth T."/>
            <person name="Churcher C."/>
            <person name="Clark L."/>
            <person name="Corton C."/>
            <person name="Cronin A."/>
            <person name="Doggett J."/>
            <person name="Dowd L."/>
            <person name="Feltwell T."/>
            <person name="Hance Z."/>
            <person name="Harris B."/>
            <person name="Hauser H."/>
            <person name="Holroyd S."/>
            <person name="Jagels K."/>
            <person name="James K.D."/>
            <person name="Lennard N."/>
            <person name="Line A."/>
            <person name="Mayes R."/>
            <person name="Moule S."/>
            <person name="Mungall K."/>
            <person name="Ormond D."/>
            <person name="Quail M.A."/>
            <person name="Rabbinowitsch E."/>
            <person name="Rutherford K.M."/>
            <person name="Sanders M."/>
            <person name="Sharp S."/>
            <person name="Simmonds M."/>
            <person name="Stevens K."/>
            <person name="Whitehead S."/>
            <person name="Barrell B.G."/>
            <person name="Spratt B.G."/>
            <person name="Parkhill J."/>
        </authorList>
    </citation>
    <scope>NUCLEOTIDE SEQUENCE [LARGE SCALE GENOMIC DNA]</scope>
    <source>
        <strain>MRSA252</strain>
    </source>
</reference>
<accession>Q6GJD2</accession>
<name>NUSG_STAAR</name>
<protein>
    <recommendedName>
        <fullName evidence="1">Transcription termination/antitermination protein NusG</fullName>
    </recommendedName>
</protein>
<feature type="chain" id="PRO_0000113950" description="Transcription termination/antitermination protein NusG">
    <location>
        <begin position="1"/>
        <end position="182"/>
    </location>
</feature>
<feature type="domain" description="KOW" evidence="1">
    <location>
        <begin position="131"/>
        <end position="163"/>
    </location>
</feature>
<dbReference type="EMBL" id="BX571856">
    <property type="protein sequence ID" value="CAG39562.1"/>
    <property type="molecule type" value="Genomic_DNA"/>
</dbReference>
<dbReference type="RefSeq" id="WP_001288302.1">
    <property type="nucleotide sequence ID" value="NC_002952.2"/>
</dbReference>
<dbReference type="SMR" id="Q6GJD2"/>
<dbReference type="KEGG" id="sar:SAR0540"/>
<dbReference type="HOGENOM" id="CLU_067287_1_1_9"/>
<dbReference type="Proteomes" id="UP000000596">
    <property type="component" value="Chromosome"/>
</dbReference>
<dbReference type="GO" id="GO:0005829">
    <property type="term" value="C:cytosol"/>
    <property type="evidence" value="ECO:0007669"/>
    <property type="project" value="TreeGrafter"/>
</dbReference>
<dbReference type="GO" id="GO:0006353">
    <property type="term" value="P:DNA-templated transcription termination"/>
    <property type="evidence" value="ECO:0007669"/>
    <property type="project" value="UniProtKB-UniRule"/>
</dbReference>
<dbReference type="GO" id="GO:0032784">
    <property type="term" value="P:regulation of DNA-templated transcription elongation"/>
    <property type="evidence" value="ECO:0007669"/>
    <property type="project" value="InterPro"/>
</dbReference>
<dbReference type="GO" id="GO:0031564">
    <property type="term" value="P:transcription antitermination"/>
    <property type="evidence" value="ECO:0007669"/>
    <property type="project" value="UniProtKB-UniRule"/>
</dbReference>
<dbReference type="GO" id="GO:0140673">
    <property type="term" value="P:transcription elongation-coupled chromatin remodeling"/>
    <property type="evidence" value="ECO:0007669"/>
    <property type="project" value="InterPro"/>
</dbReference>
<dbReference type="CDD" id="cd06091">
    <property type="entry name" value="KOW_NusG"/>
    <property type="match status" value="1"/>
</dbReference>
<dbReference type="CDD" id="cd09891">
    <property type="entry name" value="NGN_Bact_1"/>
    <property type="match status" value="1"/>
</dbReference>
<dbReference type="FunFam" id="2.30.30.30:FF:000002">
    <property type="entry name" value="Transcription termination/antitermination factor NusG"/>
    <property type="match status" value="1"/>
</dbReference>
<dbReference type="FunFam" id="3.30.70.940:FF:000002">
    <property type="entry name" value="Transcription termination/antitermination protein NusG"/>
    <property type="match status" value="1"/>
</dbReference>
<dbReference type="Gene3D" id="2.30.30.30">
    <property type="match status" value="1"/>
</dbReference>
<dbReference type="Gene3D" id="3.30.70.940">
    <property type="entry name" value="NusG, N-terminal domain"/>
    <property type="match status" value="1"/>
</dbReference>
<dbReference type="HAMAP" id="MF_00948">
    <property type="entry name" value="NusG"/>
    <property type="match status" value="1"/>
</dbReference>
<dbReference type="InterPro" id="IPR005824">
    <property type="entry name" value="KOW"/>
</dbReference>
<dbReference type="InterPro" id="IPR047050">
    <property type="entry name" value="NGN"/>
</dbReference>
<dbReference type="InterPro" id="IPR006645">
    <property type="entry name" value="NGN-like_dom"/>
</dbReference>
<dbReference type="InterPro" id="IPR036735">
    <property type="entry name" value="NGN_dom_sf"/>
</dbReference>
<dbReference type="InterPro" id="IPR043425">
    <property type="entry name" value="NusG-like"/>
</dbReference>
<dbReference type="InterPro" id="IPR014722">
    <property type="entry name" value="Rib_uL2_dom2"/>
</dbReference>
<dbReference type="InterPro" id="IPR001062">
    <property type="entry name" value="Transcrpt_antiterm_NusG"/>
</dbReference>
<dbReference type="InterPro" id="IPR015869">
    <property type="entry name" value="Transcrpt_antiterm_NusG_bac_CS"/>
</dbReference>
<dbReference type="InterPro" id="IPR008991">
    <property type="entry name" value="Translation_prot_SH3-like_sf"/>
</dbReference>
<dbReference type="NCBIfam" id="TIGR00922">
    <property type="entry name" value="nusG"/>
    <property type="match status" value="1"/>
</dbReference>
<dbReference type="PANTHER" id="PTHR30265">
    <property type="entry name" value="RHO-INTERACTING TRANSCRIPTION TERMINATION FACTOR NUSG"/>
    <property type="match status" value="1"/>
</dbReference>
<dbReference type="PANTHER" id="PTHR30265:SF2">
    <property type="entry name" value="TRANSCRIPTION TERMINATION_ANTITERMINATION PROTEIN NUSG"/>
    <property type="match status" value="1"/>
</dbReference>
<dbReference type="Pfam" id="PF00467">
    <property type="entry name" value="KOW"/>
    <property type="match status" value="1"/>
</dbReference>
<dbReference type="Pfam" id="PF02357">
    <property type="entry name" value="NusG"/>
    <property type="match status" value="1"/>
</dbReference>
<dbReference type="PRINTS" id="PR00338">
    <property type="entry name" value="NUSGTNSCPFCT"/>
</dbReference>
<dbReference type="SMART" id="SM00739">
    <property type="entry name" value="KOW"/>
    <property type="match status" value="1"/>
</dbReference>
<dbReference type="SMART" id="SM00738">
    <property type="entry name" value="NGN"/>
    <property type="match status" value="1"/>
</dbReference>
<dbReference type="SUPFAM" id="SSF82679">
    <property type="entry name" value="N-utilization substance G protein NusG, N-terminal domain"/>
    <property type="match status" value="1"/>
</dbReference>
<dbReference type="SUPFAM" id="SSF50104">
    <property type="entry name" value="Translation proteins SH3-like domain"/>
    <property type="match status" value="1"/>
</dbReference>
<dbReference type="PROSITE" id="PS01014">
    <property type="entry name" value="NUSG"/>
    <property type="match status" value="1"/>
</dbReference>
<sequence>MSEEVGAKRWYAVHTYSGYENKVKKNLEKRVESMNMTEQIFRVVIPEEEETQVKDGKAKTTVKKTFPGYVLVELIMTDESWYVVRNTPGVTGFVGSAGAGSKPNPLLPEEVRFILKQMGLKEKTIDVELEVGEQVRIKSGPFANQVGEVQEIETDKFKLTVLVDMFGRETPVEVEFDQIEKL</sequence>
<evidence type="ECO:0000255" key="1">
    <source>
        <dbReference type="HAMAP-Rule" id="MF_00948"/>
    </source>
</evidence>
<organism>
    <name type="scientific">Staphylococcus aureus (strain MRSA252)</name>
    <dbReference type="NCBI Taxonomy" id="282458"/>
    <lineage>
        <taxon>Bacteria</taxon>
        <taxon>Bacillati</taxon>
        <taxon>Bacillota</taxon>
        <taxon>Bacilli</taxon>
        <taxon>Bacillales</taxon>
        <taxon>Staphylococcaceae</taxon>
        <taxon>Staphylococcus</taxon>
    </lineage>
</organism>
<gene>
    <name evidence="1" type="primary">nusG</name>
    <name type="ordered locus">SAR0540</name>
</gene>
<proteinExistence type="inferred from homology"/>
<comment type="function">
    <text evidence="1">Participates in transcription elongation, termination and antitermination.</text>
</comment>
<comment type="similarity">
    <text evidence="1">Belongs to the NusG family.</text>
</comment>
<keyword id="KW-0804">Transcription</keyword>
<keyword id="KW-0889">Transcription antitermination</keyword>
<keyword id="KW-0805">Transcription regulation</keyword>
<keyword id="KW-0806">Transcription termination</keyword>